<accession>Q17770</accession>
<dbReference type="EC" id="5.3.4.1"/>
<dbReference type="EMBL" id="FO080373">
    <property type="protein sequence ID" value="CCD63277.1"/>
    <property type="molecule type" value="Genomic_DNA"/>
</dbReference>
<dbReference type="PIR" id="S71862">
    <property type="entry name" value="S71862"/>
</dbReference>
<dbReference type="PIR" id="T34092">
    <property type="entry name" value="T34092"/>
</dbReference>
<dbReference type="RefSeq" id="NP_508778.1">
    <property type="nucleotide sequence ID" value="NM_076377.6"/>
</dbReference>
<dbReference type="SMR" id="Q17770"/>
<dbReference type="BioGRID" id="45659">
    <property type="interactions" value="23"/>
</dbReference>
<dbReference type="FunCoup" id="Q17770">
    <property type="interactions" value="2047"/>
</dbReference>
<dbReference type="IntAct" id="Q17770">
    <property type="interactions" value="5"/>
</dbReference>
<dbReference type="MINT" id="Q17770"/>
<dbReference type="STRING" id="6239.C07A12.4a.1"/>
<dbReference type="GlyCosmos" id="Q17770">
    <property type="glycosylation" value="1 site, No reported glycans"/>
</dbReference>
<dbReference type="iPTMnet" id="Q17770"/>
<dbReference type="PaxDb" id="6239-C07A12.4a.1"/>
<dbReference type="PeptideAtlas" id="Q17770"/>
<dbReference type="EnsemblMetazoa" id="C07A12.4.1">
    <property type="protein sequence ID" value="C07A12.4.1"/>
    <property type="gene ID" value="WBGene00003963"/>
</dbReference>
<dbReference type="EnsemblMetazoa" id="C07A12.4.2">
    <property type="protein sequence ID" value="C07A12.4.2"/>
    <property type="gene ID" value="WBGene00003963"/>
</dbReference>
<dbReference type="GeneID" id="180724"/>
<dbReference type="KEGG" id="cel:CELE_C07A12.4"/>
<dbReference type="UCSC" id="C07A12.4a.1">
    <property type="organism name" value="c. elegans"/>
</dbReference>
<dbReference type="AGR" id="WB:WBGene00003963"/>
<dbReference type="CTD" id="180724"/>
<dbReference type="WormBase" id="C07A12.4">
    <property type="protein sequence ID" value="CE03972"/>
    <property type="gene ID" value="WBGene00003963"/>
    <property type="gene designation" value="pdi-2"/>
</dbReference>
<dbReference type="eggNOG" id="KOG0190">
    <property type="taxonomic scope" value="Eukaryota"/>
</dbReference>
<dbReference type="GeneTree" id="ENSGT00940000168917"/>
<dbReference type="InParanoid" id="Q17770"/>
<dbReference type="OMA" id="FFGMKKD"/>
<dbReference type="OrthoDB" id="72053at2759"/>
<dbReference type="PhylomeDB" id="Q17770"/>
<dbReference type="Reactome" id="R-CEL-1650814">
    <property type="pathway name" value="Collagen biosynthesis and modifying enzymes"/>
</dbReference>
<dbReference type="Reactome" id="R-CEL-264876">
    <property type="pathway name" value="Insulin processing"/>
</dbReference>
<dbReference type="Reactome" id="R-CEL-381426">
    <property type="pathway name" value="Regulation of Insulin-like Growth Factor (IGF) transport and uptake by Insulin-like Growth Factor Binding Proteins (IGFBPs)"/>
</dbReference>
<dbReference type="Reactome" id="R-CEL-8957275">
    <property type="pathway name" value="Post-translational protein phosphorylation"/>
</dbReference>
<dbReference type="Reactome" id="R-CEL-8964041">
    <property type="pathway name" value="LDL remodeling"/>
</dbReference>
<dbReference type="PRO" id="PR:Q17770"/>
<dbReference type="Proteomes" id="UP000001940">
    <property type="component" value="Chromosome X"/>
</dbReference>
<dbReference type="Bgee" id="WBGene00003963">
    <property type="expression patterns" value="Expressed in embryo and 4 other cell types or tissues"/>
</dbReference>
<dbReference type="GO" id="GO:0005783">
    <property type="term" value="C:endoplasmic reticulum"/>
    <property type="evidence" value="ECO:0000314"/>
    <property type="project" value="WormBase"/>
</dbReference>
<dbReference type="GO" id="GO:0005788">
    <property type="term" value="C:endoplasmic reticulum lumen"/>
    <property type="evidence" value="ECO:0007669"/>
    <property type="project" value="UniProtKB-SubCell"/>
</dbReference>
<dbReference type="GO" id="GO:0016222">
    <property type="term" value="C:procollagen-proline 4-dioxygenase complex"/>
    <property type="evidence" value="ECO:0000314"/>
    <property type="project" value="WormBase"/>
</dbReference>
<dbReference type="GO" id="GO:0003756">
    <property type="term" value="F:protein disulfide isomerase activity"/>
    <property type="evidence" value="ECO:0000314"/>
    <property type="project" value="WormBase"/>
</dbReference>
<dbReference type="GO" id="GO:0003810">
    <property type="term" value="F:protein-glutamine gamma-glutamyltransferase activity"/>
    <property type="evidence" value="ECO:0000314"/>
    <property type="project" value="WormBase"/>
</dbReference>
<dbReference type="GO" id="GO:0030968">
    <property type="term" value="P:endoplasmic reticulum unfolded protein response"/>
    <property type="evidence" value="ECO:0007007"/>
    <property type="project" value="WormBase"/>
</dbReference>
<dbReference type="GO" id="GO:0036498">
    <property type="term" value="P:IRE1-mediated unfolded protein response"/>
    <property type="evidence" value="ECO:0007007"/>
    <property type="project" value="WormBase"/>
</dbReference>
<dbReference type="GO" id="GO:0043412">
    <property type="term" value="P:macromolecule modification"/>
    <property type="evidence" value="ECO:0000314"/>
    <property type="project" value="WormBase"/>
</dbReference>
<dbReference type="GO" id="GO:0006457">
    <property type="term" value="P:protein folding"/>
    <property type="evidence" value="ECO:0000318"/>
    <property type="project" value="GO_Central"/>
</dbReference>
<dbReference type="GO" id="GO:0034976">
    <property type="term" value="P:response to endoplasmic reticulum stress"/>
    <property type="evidence" value="ECO:0000318"/>
    <property type="project" value="GO_Central"/>
</dbReference>
<dbReference type="CDD" id="cd02961">
    <property type="entry name" value="PDI_a_family"/>
    <property type="match status" value="1"/>
</dbReference>
<dbReference type="CDD" id="cd02995">
    <property type="entry name" value="PDI_a_PDI_a'_C"/>
    <property type="match status" value="1"/>
</dbReference>
<dbReference type="CDD" id="cd02982">
    <property type="entry name" value="PDI_b'_family"/>
    <property type="match status" value="1"/>
</dbReference>
<dbReference type="CDD" id="cd02981">
    <property type="entry name" value="PDI_b_family"/>
    <property type="match status" value="1"/>
</dbReference>
<dbReference type="FunFam" id="3.40.30.10:FF:000023">
    <property type="entry name" value="Protein disulfide-isomerase"/>
    <property type="match status" value="1"/>
</dbReference>
<dbReference type="FunFam" id="3.40.30.10:FF:000030">
    <property type="entry name" value="Protein disulfide-isomerase"/>
    <property type="match status" value="1"/>
</dbReference>
<dbReference type="FunFam" id="3.40.30.10:FF:000027">
    <property type="entry name" value="protein disulfide-isomerase A2"/>
    <property type="match status" value="1"/>
</dbReference>
<dbReference type="FunFam" id="3.40.30.10:FF:000042">
    <property type="entry name" value="protein disulfide-isomerase A2"/>
    <property type="match status" value="1"/>
</dbReference>
<dbReference type="Gene3D" id="3.40.30.10">
    <property type="entry name" value="Glutaredoxin"/>
    <property type="match status" value="4"/>
</dbReference>
<dbReference type="InterPro" id="IPR005788">
    <property type="entry name" value="PDI_thioredoxin-like_dom"/>
</dbReference>
<dbReference type="InterPro" id="IPR005792">
    <property type="entry name" value="Prot_disulphide_isomerase"/>
</dbReference>
<dbReference type="InterPro" id="IPR036249">
    <property type="entry name" value="Thioredoxin-like_sf"/>
</dbReference>
<dbReference type="InterPro" id="IPR017937">
    <property type="entry name" value="Thioredoxin_CS"/>
</dbReference>
<dbReference type="InterPro" id="IPR013766">
    <property type="entry name" value="Thioredoxin_domain"/>
</dbReference>
<dbReference type="NCBIfam" id="TIGR01130">
    <property type="entry name" value="ER_PDI_fam"/>
    <property type="match status" value="1"/>
</dbReference>
<dbReference type="NCBIfam" id="TIGR01126">
    <property type="entry name" value="pdi_dom"/>
    <property type="match status" value="2"/>
</dbReference>
<dbReference type="PANTHER" id="PTHR18929">
    <property type="entry name" value="PROTEIN DISULFIDE ISOMERASE"/>
    <property type="match status" value="1"/>
</dbReference>
<dbReference type="PANTHER" id="PTHR18929:SF240">
    <property type="entry name" value="PROTEIN DISULFIDE-ISOMERASE"/>
    <property type="match status" value="1"/>
</dbReference>
<dbReference type="Pfam" id="PF00085">
    <property type="entry name" value="Thioredoxin"/>
    <property type="match status" value="2"/>
</dbReference>
<dbReference type="Pfam" id="PF13848">
    <property type="entry name" value="Thioredoxin_6"/>
    <property type="match status" value="1"/>
</dbReference>
<dbReference type="PRINTS" id="PR00421">
    <property type="entry name" value="THIOREDOXIN"/>
</dbReference>
<dbReference type="SUPFAM" id="SSF52833">
    <property type="entry name" value="Thioredoxin-like"/>
    <property type="match status" value="4"/>
</dbReference>
<dbReference type="PROSITE" id="PS00194">
    <property type="entry name" value="THIOREDOXIN_1"/>
    <property type="match status" value="2"/>
</dbReference>
<dbReference type="PROSITE" id="PS51352">
    <property type="entry name" value="THIOREDOXIN_2"/>
    <property type="match status" value="2"/>
</dbReference>
<comment type="function">
    <text evidence="5 8">Involved in cuticle formation (PubMed:10805750). May play a role in the unfolded protein response (PubMed:21199936).</text>
</comment>
<comment type="catalytic activity">
    <reaction>
        <text>Catalyzes the rearrangement of -S-S- bonds in proteins.</text>
        <dbReference type="EC" id="5.3.4.1"/>
    </reaction>
</comment>
<comment type="subunit">
    <text evidence="6">Heterotetramer of two alpha chains and two beta chains. Exist either as a phy-1(2)/pdi-2(2) tetramer, a phy-2(2)/pdi-2(2) tetramer or as a phy-1/phy-2/pdi-2(2) tetramer.</text>
</comment>
<comment type="subcellular location">
    <subcellularLocation>
        <location>Endoplasmic reticulum lumen</location>
    </subcellularLocation>
</comment>
<comment type="developmental stage">
    <text evidence="5">Expressed in oscillating waves in hypodermal cells during the 4 larval stages and in adults.</text>
</comment>
<comment type="disruption phenotype">
    <text evidence="5 8">RNAi-mediated knockdown causes embryonic lethality characterized by a retraction of the fully elongated embryo, a progressive disorganization of the embryo and a failure to hatch (PubMed:10805750). Also causes increased expression of the unfolded protein response (UPR) marker hsp-4 (PubMed:21199936).</text>
</comment>
<comment type="similarity">
    <text evidence="9">Belongs to the protein disulfide isomerase family.</text>
</comment>
<sequence length="493" mass="55152">MFRLVGLFFLVLGASAAVIEEEENVIVLTKDNFDEVINGNEFILVEFYAPWCGHCKSLAPEYAKAATQLKEEGSDIKLGKLDATVHGEVSSKFEVRGYPTLKLFRNGKPQEYNGGRDHDSIIAWLKKKTGPVAKPLADADAVKELQESADVVVIGYFKDTTSDDAKTFLEVAAGIDDVPFGISTEDAVKSEIELKGEGIVLFKKFDDGRVAFDEKLTQDGLKTWIQANRLALVSEFTQETASVIFGGEIKSHNLLFVSKESSEFAKLEQEFKNAAKQFKGKVLFVYINTDVEENARIMEFFGLKKDELPAIRLISLEEDMTKFKPDFEEITTENISKFTQNYLDGSVKPHLMSEDIPEDWDKNPVKILVGKNFEQVARDNTKNVLVEFYAPWCGHCKQLAPTWDKLGEKFADDESIVIAKMDSTLNEVEDVKIQSFPTIKFFPAGSNKVVDYTGDRTIEGFTKFLETNGKEGAGASEEEKAEEEADEEGHTEL</sequence>
<name>PDI2_CAEEL</name>
<feature type="signal peptide" evidence="2">
    <location>
        <begin position="1"/>
        <end position="16"/>
    </location>
</feature>
<feature type="chain" id="PRO_0000034204" description="Protein disulfide-isomerase 2">
    <location>
        <begin position="17"/>
        <end position="493"/>
    </location>
</feature>
<feature type="domain" description="Thioredoxin 1" evidence="3">
    <location>
        <begin position="17"/>
        <end position="130"/>
    </location>
</feature>
<feature type="domain" description="Thioredoxin 2" evidence="3">
    <location>
        <begin position="342"/>
        <end position="470"/>
    </location>
</feature>
<feature type="region of interest" description="Disordered" evidence="4">
    <location>
        <begin position="467"/>
        <end position="493"/>
    </location>
</feature>
<feature type="short sequence motif" description="Prevents secretion from ER" evidence="2">
    <location>
        <begin position="490"/>
        <end position="493"/>
    </location>
</feature>
<feature type="active site" description="Nucleophile" evidence="1">
    <location>
        <position position="52"/>
    </location>
</feature>
<feature type="active site" description="Nucleophile" evidence="1">
    <location>
        <position position="55"/>
    </location>
</feature>
<feature type="active site" description="Nucleophile" evidence="1">
    <location>
        <position position="393"/>
    </location>
</feature>
<feature type="active site" description="Nucleophile" evidence="1">
    <location>
        <position position="396"/>
    </location>
</feature>
<feature type="site" description="Contributes to redox potential value" evidence="1">
    <location>
        <position position="53"/>
    </location>
</feature>
<feature type="site" description="Contributes to redox potential value" evidence="1">
    <location>
        <position position="54"/>
    </location>
</feature>
<feature type="site" description="Lowers pKa of C-terminal Cys of first active site" evidence="1">
    <location>
        <position position="116"/>
    </location>
</feature>
<feature type="site" description="Contributes to redox potential value" evidence="1">
    <location>
        <position position="394"/>
    </location>
</feature>
<feature type="site" description="Contributes to redox potential value" evidence="1">
    <location>
        <position position="395"/>
    </location>
</feature>
<feature type="site" description="Lowers pKa of C-terminal Cys of second active site" evidence="1">
    <location>
        <position position="456"/>
    </location>
</feature>
<feature type="glycosylation site" description="N-linked (GlcNAc...) asparagine" evidence="7">
    <location>
        <position position="334"/>
    </location>
</feature>
<feature type="disulfide bond" description="Redox-active" evidence="3">
    <location>
        <begin position="52"/>
        <end position="55"/>
    </location>
</feature>
<feature type="disulfide bond" description="Redox-active" evidence="3">
    <location>
        <begin position="393"/>
        <end position="396"/>
    </location>
</feature>
<protein>
    <recommendedName>
        <fullName>Protein disulfide-isomerase 2</fullName>
        <ecNumber>5.3.4.1</ecNumber>
    </recommendedName>
    <alternativeName>
        <fullName>PDI 1</fullName>
    </alternativeName>
    <alternativeName>
        <fullName>Prolyl 4-hydroxylase subunit beta-2</fullName>
    </alternativeName>
</protein>
<gene>
    <name type="primary">pdi-2</name>
    <name type="ORF">C07A12.4</name>
</gene>
<keyword id="KW-1015">Disulfide bond</keyword>
<keyword id="KW-0256">Endoplasmic reticulum</keyword>
<keyword id="KW-0325">Glycoprotein</keyword>
<keyword id="KW-0413">Isomerase</keyword>
<keyword id="KW-0676">Redox-active center</keyword>
<keyword id="KW-1185">Reference proteome</keyword>
<keyword id="KW-0677">Repeat</keyword>
<keyword id="KW-0732">Signal</keyword>
<reference key="1">
    <citation type="journal article" date="1996" name="Biochem. J.">
        <title>Baculovirus expression of two protein disulphide isomerase isoforms from Caenorhabditis elegans and characterization of prolyl 4-hydroxylases containing one of these polypeptides as their beta subunit.</title>
        <authorList>
            <person name="Veijola J."/>
            <person name="Annunen P."/>
            <person name="Koivunen P."/>
            <person name="Page A.P."/>
            <person name="Pihlajaniemi T."/>
            <person name="Kivirikko K.I."/>
        </authorList>
    </citation>
    <scope>NUCLEOTIDE SEQUENCE [GENOMIC DNA]</scope>
</reference>
<reference key="2">
    <citation type="journal article" date="1998" name="Science">
        <title>Genome sequence of the nematode C. elegans: a platform for investigating biology.</title>
        <authorList>
            <consortium name="The C. elegans sequencing consortium"/>
        </authorList>
    </citation>
    <scope>NUCLEOTIDE SEQUENCE [LARGE SCALE GENOMIC DNA]</scope>
    <source>
        <strain>Bristol N2</strain>
    </source>
</reference>
<reference key="3">
    <citation type="journal article" date="2000" name="Mol. Cell. Biol.">
        <title>Prolyl 4-hydroxylase is an essential procollagen-modifying enzyme required for exoskeleton formation and the maintenance of body shape in the nematode Caenorhabditis elegans.</title>
        <authorList>
            <person name="Winter A.D."/>
            <person name="Page A.P."/>
        </authorList>
    </citation>
    <scope>FUNCTION</scope>
    <scope>DEVELOPMENTAL STAGE</scope>
    <scope>DISRUPTION PHENOTYPE</scope>
</reference>
<reference key="4">
    <citation type="journal article" date="2002" name="J. Biol. Chem.">
        <title>The exoskeleton collagens in Caenorhabditis elegans are modified by prolyl 4-hydroxylases with unique combinations of subunits.</title>
        <authorList>
            <person name="Myllyharju J."/>
            <person name="Kukkola L."/>
            <person name="Winter A.D."/>
            <person name="Page A.P."/>
        </authorList>
    </citation>
    <scope>SUBUNIT</scope>
</reference>
<reference key="5">
    <citation type="journal article" date="2007" name="Mol. Cell. Proteomics">
        <title>Proteomics reveals N-linked glycoprotein diversity in Caenorhabditis elegans and suggests an atypical translocation mechanism for integral membrane proteins.</title>
        <authorList>
            <person name="Kaji H."/>
            <person name="Kamiie J."/>
            <person name="Kawakami H."/>
            <person name="Kido K."/>
            <person name="Yamauchi Y."/>
            <person name="Shinkawa T."/>
            <person name="Taoka M."/>
            <person name="Takahashi N."/>
            <person name="Isobe T."/>
        </authorList>
    </citation>
    <scope>GLYCOSYLATION [LARGE SCALE ANALYSIS] AT ASN-334</scope>
    <scope>IDENTIFICATION BY MASS SPECTROMETRY</scope>
    <source>
        <strain>Bristol N2</strain>
    </source>
</reference>
<reference key="6">
    <citation type="journal article" date="2011" name="Proc. Natl. Acad. Sci. U.S.A.">
        <title>Selenoprotein TRXR-1 and GSR-1 are essential for removal of old cuticle during molting in Caenorhabditis elegans.</title>
        <authorList>
            <person name="Stenvall J."/>
            <person name="Fierro-Gonzalez J.C."/>
            <person name="Swoboda P."/>
            <person name="Saamarthy K."/>
            <person name="Cheng Q."/>
            <person name="Cacho-Valadez B."/>
            <person name="Arner E.S."/>
            <person name="Persson O.P."/>
            <person name="Miranda-Vizuete A."/>
            <person name="Tuck S."/>
        </authorList>
    </citation>
    <scope>FUNCTION</scope>
    <scope>DISRUPTION PHENOTYPE</scope>
</reference>
<organism>
    <name type="scientific">Caenorhabditis elegans</name>
    <dbReference type="NCBI Taxonomy" id="6239"/>
    <lineage>
        <taxon>Eukaryota</taxon>
        <taxon>Metazoa</taxon>
        <taxon>Ecdysozoa</taxon>
        <taxon>Nematoda</taxon>
        <taxon>Chromadorea</taxon>
        <taxon>Rhabditida</taxon>
        <taxon>Rhabditina</taxon>
        <taxon>Rhabditomorpha</taxon>
        <taxon>Rhabditoidea</taxon>
        <taxon>Rhabditidae</taxon>
        <taxon>Peloderinae</taxon>
        <taxon>Caenorhabditis</taxon>
    </lineage>
</organism>
<evidence type="ECO:0000250" key="1"/>
<evidence type="ECO:0000255" key="2"/>
<evidence type="ECO:0000255" key="3">
    <source>
        <dbReference type="PROSITE-ProRule" id="PRU00691"/>
    </source>
</evidence>
<evidence type="ECO:0000256" key="4">
    <source>
        <dbReference type="SAM" id="MobiDB-lite"/>
    </source>
</evidence>
<evidence type="ECO:0000269" key="5">
    <source>
    </source>
</evidence>
<evidence type="ECO:0000269" key="6">
    <source>
    </source>
</evidence>
<evidence type="ECO:0000269" key="7">
    <source>
    </source>
</evidence>
<evidence type="ECO:0000269" key="8">
    <source>
    </source>
</evidence>
<evidence type="ECO:0000305" key="9"/>
<proteinExistence type="evidence at protein level"/>